<protein>
    <recommendedName>
        <fullName>Olfactory receptor 7G2</fullName>
    </recommendedName>
    <alternativeName>
        <fullName>OST260</fullName>
    </alternativeName>
    <alternativeName>
        <fullName>Olfactory receptor 19-13</fullName>
        <shortName>OR19-13</shortName>
    </alternativeName>
    <alternativeName>
        <fullName>Olfactory receptor OR19-6</fullName>
    </alternativeName>
</protein>
<comment type="function">
    <text evidence="3">Odorant receptor.</text>
</comment>
<comment type="subcellular location">
    <subcellularLocation>
        <location>Cell membrane</location>
        <topology>Multi-pass membrane protein</topology>
    </subcellularLocation>
</comment>
<comment type="similarity">
    <text evidence="2">Belongs to the G-protein coupled receptor 1 family.</text>
</comment>
<comment type="sequence caution" evidence="3">
    <conflict type="erroneous initiation">
        <sequence resource="EMBL-CDS" id="DAA04666"/>
    </conflict>
</comment>
<comment type="online information" name="Human Olfactory Receptor Data Exploratorium (HORDE)">
    <link uri="http://genome.weizmann.ac.il/horde/card/index/symbol:OR7G2"/>
</comment>
<sequence length="324" mass="35931">MEARNQTAISKFLLLGLIEDPELQPVLFSLFLSMYLVTILGNLLILLAVISDSHLHTPMYFFLSNLSFLDICLSTTTIPKMLVNIQAQNRSITYSGCLTQICFVLFFAGLENCLLAAMAYDRYVAICHPLRYTVIMNPRLCGLLILLSLLTSVVNALLLSLMVLRLSFCTDLEIPLFFCELAQVIQLTCSDTLINNILIYFAACIFGGVPLSGIILSYTQITSCVLRMPSASGKHKAVSTCGSHLSIVLLFYGAGLGVYISSVVTDSPRKTAVASVMYSVFPQMVNPFIYSLRNKDMKGTLRKFIGRIPSLLWCAICFGFRFLE</sequence>
<feature type="chain" id="PRO_0000150651" description="Olfactory receptor 7G2">
    <location>
        <begin position="1"/>
        <end position="324"/>
    </location>
</feature>
<feature type="topological domain" description="Extracellular" evidence="1">
    <location>
        <begin position="1"/>
        <end position="25"/>
    </location>
</feature>
<feature type="transmembrane region" description="Helical; Name=1" evidence="1">
    <location>
        <begin position="26"/>
        <end position="46"/>
    </location>
</feature>
<feature type="topological domain" description="Cytoplasmic" evidence="1">
    <location>
        <begin position="47"/>
        <end position="54"/>
    </location>
</feature>
<feature type="transmembrane region" description="Helical; Name=2" evidence="1">
    <location>
        <begin position="55"/>
        <end position="75"/>
    </location>
</feature>
<feature type="topological domain" description="Extracellular" evidence="1">
    <location>
        <begin position="76"/>
        <end position="99"/>
    </location>
</feature>
<feature type="transmembrane region" description="Helical; Name=3" evidence="1">
    <location>
        <begin position="100"/>
        <end position="120"/>
    </location>
</feature>
<feature type="topological domain" description="Cytoplasmic" evidence="1">
    <location>
        <begin position="121"/>
        <end position="139"/>
    </location>
</feature>
<feature type="transmembrane region" description="Helical; Name=4" evidence="1">
    <location>
        <begin position="140"/>
        <end position="160"/>
    </location>
</feature>
<feature type="topological domain" description="Extracellular" evidence="1">
    <location>
        <begin position="161"/>
        <end position="197"/>
    </location>
</feature>
<feature type="transmembrane region" description="Helical; Name=5" evidence="1">
    <location>
        <begin position="198"/>
        <end position="217"/>
    </location>
</feature>
<feature type="topological domain" description="Cytoplasmic" evidence="1">
    <location>
        <begin position="218"/>
        <end position="237"/>
    </location>
</feature>
<feature type="transmembrane region" description="Helical; Name=6" evidence="1">
    <location>
        <begin position="238"/>
        <end position="258"/>
    </location>
</feature>
<feature type="topological domain" description="Extracellular" evidence="1">
    <location>
        <begin position="259"/>
        <end position="271"/>
    </location>
</feature>
<feature type="transmembrane region" description="Helical; Name=7" evidence="1">
    <location>
        <begin position="272"/>
        <end position="292"/>
    </location>
</feature>
<feature type="topological domain" description="Cytoplasmic" evidence="1">
    <location>
        <begin position="293"/>
        <end position="324"/>
    </location>
</feature>
<feature type="glycosylation site" description="N-linked (GlcNAc...) asparagine" evidence="1">
    <location>
        <position position="5"/>
    </location>
</feature>
<feature type="glycosylation site" description="N-linked (GlcNAc...) asparagine" evidence="1">
    <location>
        <position position="89"/>
    </location>
</feature>
<feature type="disulfide bond" evidence="2">
    <location>
        <begin position="97"/>
        <end position="189"/>
    </location>
</feature>
<feature type="sequence variant" id="VAR_024113" description="In dbSNP:rs4804401.">
    <original>F</original>
    <variation>V</variation>
    <location>
        <position position="281"/>
    </location>
</feature>
<feature type="sequence conflict" description="In Ref. 3; AAK95024." evidence="3" ref="3">
    <original>T</original>
    <variation>A</variation>
    <location>
        <position position="271"/>
    </location>
</feature>
<gene>
    <name type="primary">OR7G2</name>
</gene>
<evidence type="ECO:0000255" key="1"/>
<evidence type="ECO:0000255" key="2">
    <source>
        <dbReference type="PROSITE-ProRule" id="PRU00521"/>
    </source>
</evidence>
<evidence type="ECO:0000305" key="3"/>
<dbReference type="EMBL" id="AB065927">
    <property type="protein sequence ID" value="BAC06142.1"/>
    <property type="molecule type" value="Genomic_DNA"/>
</dbReference>
<dbReference type="EMBL" id="AC011464">
    <property type="status" value="NOT_ANNOTATED_CDS"/>
    <property type="molecule type" value="Genomic_DNA"/>
</dbReference>
<dbReference type="EMBL" id="AF399539">
    <property type="protein sequence ID" value="AAK95024.1"/>
    <property type="molecule type" value="Genomic_DNA"/>
</dbReference>
<dbReference type="EMBL" id="BK004268">
    <property type="protein sequence ID" value="DAA04666.1"/>
    <property type="status" value="ALT_INIT"/>
    <property type="molecule type" value="Genomic_DNA"/>
</dbReference>
<dbReference type="CCDS" id="CCDS32897.2"/>
<dbReference type="RefSeq" id="NP_001005193.2">
    <property type="nucleotide sequence ID" value="NM_001005193.2"/>
</dbReference>
<dbReference type="SMR" id="Q8NG99"/>
<dbReference type="FunCoup" id="Q8NG99">
    <property type="interactions" value="464"/>
</dbReference>
<dbReference type="STRING" id="9606.ENSP00000303822"/>
<dbReference type="GlyCosmos" id="Q8NG99">
    <property type="glycosylation" value="2 sites, No reported glycans"/>
</dbReference>
<dbReference type="GlyGen" id="Q8NG99">
    <property type="glycosylation" value="2 sites"/>
</dbReference>
<dbReference type="BioMuta" id="OR7G2"/>
<dbReference type="DMDM" id="38372649"/>
<dbReference type="MassIVE" id="Q8NG99"/>
<dbReference type="PaxDb" id="9606-ENSP00000303822"/>
<dbReference type="PeptideAtlas" id="Q8NG99"/>
<dbReference type="ProteomicsDB" id="73457"/>
<dbReference type="Antibodypedia" id="68411">
    <property type="antibodies" value="66 antibodies from 17 providers"/>
</dbReference>
<dbReference type="DNASU" id="390882"/>
<dbReference type="Ensembl" id="ENST00000641081.1">
    <property type="protein sequence ID" value="ENSP00000492896.1"/>
    <property type="gene ID" value="ENSG00000170923.4"/>
</dbReference>
<dbReference type="GeneID" id="390882"/>
<dbReference type="KEGG" id="hsa:390882"/>
<dbReference type="MANE-Select" id="ENST00000641081.1">
    <property type="protein sequence ID" value="ENSP00000492896.1"/>
    <property type="RefSeq nucleotide sequence ID" value="NM_001005193.2"/>
    <property type="RefSeq protein sequence ID" value="NP_001005193.2"/>
</dbReference>
<dbReference type="UCSC" id="uc010xkk.2">
    <property type="organism name" value="human"/>
</dbReference>
<dbReference type="AGR" id="HGNC:8466"/>
<dbReference type="CTD" id="390882"/>
<dbReference type="DisGeNET" id="390882"/>
<dbReference type="GeneCards" id="OR7G2"/>
<dbReference type="HGNC" id="HGNC:8466">
    <property type="gene designation" value="OR7G2"/>
</dbReference>
<dbReference type="HPA" id="ENSG00000170923">
    <property type="expression patterns" value="Not detected"/>
</dbReference>
<dbReference type="neXtProt" id="NX_Q8NG99"/>
<dbReference type="VEuPathDB" id="HostDB:ENSG00000170923"/>
<dbReference type="eggNOG" id="ENOG502T9M5">
    <property type="taxonomic scope" value="Eukaryota"/>
</dbReference>
<dbReference type="GeneTree" id="ENSGT00940000154131"/>
<dbReference type="HOGENOM" id="CLU_012526_1_0_1"/>
<dbReference type="InParanoid" id="Q8NG99"/>
<dbReference type="OrthoDB" id="9444602at2759"/>
<dbReference type="PAN-GO" id="Q8NG99">
    <property type="GO annotations" value="3 GO annotations based on evolutionary models"/>
</dbReference>
<dbReference type="PhylomeDB" id="Q8NG99"/>
<dbReference type="TreeFam" id="TF337210"/>
<dbReference type="PathwayCommons" id="Q8NG99"/>
<dbReference type="Reactome" id="R-HSA-381753">
    <property type="pathway name" value="Olfactory Signaling Pathway"/>
</dbReference>
<dbReference type="Reactome" id="R-HSA-9752946">
    <property type="pathway name" value="Expression and translocation of olfactory receptors"/>
</dbReference>
<dbReference type="BioGRID-ORCS" id="390882">
    <property type="hits" value="28 hits in 734 CRISPR screens"/>
</dbReference>
<dbReference type="ChiTaRS" id="OR7G2">
    <property type="organism name" value="human"/>
</dbReference>
<dbReference type="GeneWiki" id="OR7G2"/>
<dbReference type="GenomeRNAi" id="390882"/>
<dbReference type="Pharos" id="Q8NG99">
    <property type="development level" value="Tdark"/>
</dbReference>
<dbReference type="PRO" id="PR:Q8NG99"/>
<dbReference type="Proteomes" id="UP000005640">
    <property type="component" value="Chromosome 19"/>
</dbReference>
<dbReference type="RNAct" id="Q8NG99">
    <property type="molecule type" value="protein"/>
</dbReference>
<dbReference type="Bgee" id="ENSG00000170923">
    <property type="expression patterns" value="Expressed in popliteal artery and 1 other cell type or tissue"/>
</dbReference>
<dbReference type="ExpressionAtlas" id="Q8NG99">
    <property type="expression patterns" value="baseline and differential"/>
</dbReference>
<dbReference type="GO" id="GO:0005886">
    <property type="term" value="C:plasma membrane"/>
    <property type="evidence" value="ECO:0000318"/>
    <property type="project" value="GO_Central"/>
</dbReference>
<dbReference type="GO" id="GO:0004930">
    <property type="term" value="F:G protein-coupled receptor activity"/>
    <property type="evidence" value="ECO:0007669"/>
    <property type="project" value="UniProtKB-KW"/>
</dbReference>
<dbReference type="GO" id="GO:0004984">
    <property type="term" value="F:olfactory receptor activity"/>
    <property type="evidence" value="ECO:0000318"/>
    <property type="project" value="GO_Central"/>
</dbReference>
<dbReference type="GO" id="GO:0007165">
    <property type="term" value="P:signal transduction"/>
    <property type="evidence" value="ECO:0000318"/>
    <property type="project" value="GO_Central"/>
</dbReference>
<dbReference type="CDD" id="cd15234">
    <property type="entry name" value="7tmA_OR7-like"/>
    <property type="match status" value="1"/>
</dbReference>
<dbReference type="FunFam" id="1.20.1070.10:FF:000009">
    <property type="entry name" value="Olfactory receptor"/>
    <property type="match status" value="1"/>
</dbReference>
<dbReference type="Gene3D" id="1.20.1070.10">
    <property type="entry name" value="Rhodopsin 7-helix transmembrane proteins"/>
    <property type="match status" value="1"/>
</dbReference>
<dbReference type="InterPro" id="IPR000276">
    <property type="entry name" value="GPCR_Rhodpsn"/>
</dbReference>
<dbReference type="InterPro" id="IPR017452">
    <property type="entry name" value="GPCR_Rhodpsn_7TM"/>
</dbReference>
<dbReference type="InterPro" id="IPR000725">
    <property type="entry name" value="Olfact_rcpt"/>
</dbReference>
<dbReference type="PANTHER" id="PTHR48001">
    <property type="entry name" value="OLFACTORY RECEPTOR"/>
    <property type="match status" value="1"/>
</dbReference>
<dbReference type="Pfam" id="PF13853">
    <property type="entry name" value="7tm_4"/>
    <property type="match status" value="1"/>
</dbReference>
<dbReference type="PRINTS" id="PR00237">
    <property type="entry name" value="GPCRRHODOPSN"/>
</dbReference>
<dbReference type="PRINTS" id="PR00245">
    <property type="entry name" value="OLFACTORYR"/>
</dbReference>
<dbReference type="SUPFAM" id="SSF81321">
    <property type="entry name" value="Family A G protein-coupled receptor-like"/>
    <property type="match status" value="1"/>
</dbReference>
<dbReference type="PROSITE" id="PS00237">
    <property type="entry name" value="G_PROTEIN_RECEP_F1_1"/>
    <property type="match status" value="1"/>
</dbReference>
<dbReference type="PROSITE" id="PS50262">
    <property type="entry name" value="G_PROTEIN_RECEP_F1_2"/>
    <property type="match status" value="1"/>
</dbReference>
<proteinExistence type="inferred from homology"/>
<organism>
    <name type="scientific">Homo sapiens</name>
    <name type="common">Human</name>
    <dbReference type="NCBI Taxonomy" id="9606"/>
    <lineage>
        <taxon>Eukaryota</taxon>
        <taxon>Metazoa</taxon>
        <taxon>Chordata</taxon>
        <taxon>Craniata</taxon>
        <taxon>Vertebrata</taxon>
        <taxon>Euteleostomi</taxon>
        <taxon>Mammalia</taxon>
        <taxon>Eutheria</taxon>
        <taxon>Euarchontoglires</taxon>
        <taxon>Primates</taxon>
        <taxon>Haplorrhini</taxon>
        <taxon>Catarrhini</taxon>
        <taxon>Hominidae</taxon>
        <taxon>Homo</taxon>
    </lineage>
</organism>
<name>OR7G2_HUMAN</name>
<keyword id="KW-1003">Cell membrane</keyword>
<keyword id="KW-1015">Disulfide bond</keyword>
<keyword id="KW-0297">G-protein coupled receptor</keyword>
<keyword id="KW-0325">Glycoprotein</keyword>
<keyword id="KW-0472">Membrane</keyword>
<keyword id="KW-0552">Olfaction</keyword>
<keyword id="KW-0675">Receptor</keyword>
<keyword id="KW-1185">Reference proteome</keyword>
<keyword id="KW-0716">Sensory transduction</keyword>
<keyword id="KW-0807">Transducer</keyword>
<keyword id="KW-0812">Transmembrane</keyword>
<keyword id="KW-1133">Transmembrane helix</keyword>
<accession>Q8NG99</accession>
<accession>Q6IFJ4</accession>
<accession>Q96RA0</accession>
<reference key="1">
    <citation type="submission" date="2001-07" db="EMBL/GenBank/DDBJ databases">
        <title>Genome-wide discovery and analysis of human seven transmembrane helix receptor genes.</title>
        <authorList>
            <person name="Suwa M."/>
            <person name="Sato T."/>
            <person name="Okouchi I."/>
            <person name="Arita M."/>
            <person name="Futami K."/>
            <person name="Matsumoto S."/>
            <person name="Tsutsumi S."/>
            <person name="Aburatani H."/>
            <person name="Asai K."/>
            <person name="Akiyama Y."/>
        </authorList>
    </citation>
    <scope>NUCLEOTIDE SEQUENCE [GENOMIC DNA]</scope>
</reference>
<reference key="2">
    <citation type="journal article" date="2004" name="Nature">
        <title>The DNA sequence and biology of human chromosome 19.</title>
        <authorList>
            <person name="Grimwood J."/>
            <person name="Gordon L.A."/>
            <person name="Olsen A.S."/>
            <person name="Terry A."/>
            <person name="Schmutz J."/>
            <person name="Lamerdin J.E."/>
            <person name="Hellsten U."/>
            <person name="Goodstein D."/>
            <person name="Couronne O."/>
            <person name="Tran-Gyamfi M."/>
            <person name="Aerts A."/>
            <person name="Altherr M."/>
            <person name="Ashworth L."/>
            <person name="Bajorek E."/>
            <person name="Black S."/>
            <person name="Branscomb E."/>
            <person name="Caenepeel S."/>
            <person name="Carrano A.V."/>
            <person name="Caoile C."/>
            <person name="Chan Y.M."/>
            <person name="Christensen M."/>
            <person name="Cleland C.A."/>
            <person name="Copeland A."/>
            <person name="Dalin E."/>
            <person name="Dehal P."/>
            <person name="Denys M."/>
            <person name="Detter J.C."/>
            <person name="Escobar J."/>
            <person name="Flowers D."/>
            <person name="Fotopulos D."/>
            <person name="Garcia C."/>
            <person name="Georgescu A.M."/>
            <person name="Glavina T."/>
            <person name="Gomez M."/>
            <person name="Gonzales E."/>
            <person name="Groza M."/>
            <person name="Hammon N."/>
            <person name="Hawkins T."/>
            <person name="Haydu L."/>
            <person name="Ho I."/>
            <person name="Huang W."/>
            <person name="Israni S."/>
            <person name="Jett J."/>
            <person name="Kadner K."/>
            <person name="Kimball H."/>
            <person name="Kobayashi A."/>
            <person name="Larionov V."/>
            <person name="Leem S.-H."/>
            <person name="Lopez F."/>
            <person name="Lou Y."/>
            <person name="Lowry S."/>
            <person name="Malfatti S."/>
            <person name="Martinez D."/>
            <person name="McCready P.M."/>
            <person name="Medina C."/>
            <person name="Morgan J."/>
            <person name="Nelson K."/>
            <person name="Nolan M."/>
            <person name="Ovcharenko I."/>
            <person name="Pitluck S."/>
            <person name="Pollard M."/>
            <person name="Popkie A.P."/>
            <person name="Predki P."/>
            <person name="Quan G."/>
            <person name="Ramirez L."/>
            <person name="Rash S."/>
            <person name="Retterer J."/>
            <person name="Rodriguez A."/>
            <person name="Rogers S."/>
            <person name="Salamov A."/>
            <person name="Salazar A."/>
            <person name="She X."/>
            <person name="Smith D."/>
            <person name="Slezak T."/>
            <person name="Solovyev V."/>
            <person name="Thayer N."/>
            <person name="Tice H."/>
            <person name="Tsai M."/>
            <person name="Ustaszewska A."/>
            <person name="Vo N."/>
            <person name="Wagner M."/>
            <person name="Wheeler J."/>
            <person name="Wu K."/>
            <person name="Xie G."/>
            <person name="Yang J."/>
            <person name="Dubchak I."/>
            <person name="Furey T.S."/>
            <person name="DeJong P."/>
            <person name="Dickson M."/>
            <person name="Gordon D."/>
            <person name="Eichler E.E."/>
            <person name="Pennacchio L.A."/>
            <person name="Richardson P."/>
            <person name="Stubbs L."/>
            <person name="Rokhsar D.S."/>
            <person name="Myers R.M."/>
            <person name="Rubin E.M."/>
            <person name="Lucas S.M."/>
        </authorList>
    </citation>
    <scope>NUCLEOTIDE SEQUENCE [LARGE SCALE GENOMIC DNA]</scope>
</reference>
<reference key="3">
    <citation type="journal article" date="2002" name="Genomics">
        <title>DEFOG: a practical scheme for deciphering families of genes.</title>
        <authorList>
            <person name="Fuchs T."/>
            <person name="Malecova B."/>
            <person name="Linhart C."/>
            <person name="Sharan R."/>
            <person name="Khen M."/>
            <person name="Herwig R."/>
            <person name="Shmulevich D."/>
            <person name="Elkon R."/>
            <person name="Steinfath M."/>
            <person name="O'Brien J.K."/>
            <person name="Radelof U."/>
            <person name="Lehrach H."/>
            <person name="Lancet D."/>
            <person name="Shamir R."/>
        </authorList>
    </citation>
    <scope>NUCLEOTIDE SEQUENCE [GENOMIC DNA] OF 68-283</scope>
</reference>
<reference key="4">
    <citation type="journal article" date="2004" name="Proc. Natl. Acad. Sci. U.S.A.">
        <title>The human olfactory receptor gene family.</title>
        <authorList>
            <person name="Malnic B."/>
            <person name="Godfrey P.A."/>
            <person name="Buck L.B."/>
        </authorList>
    </citation>
    <scope>IDENTIFICATION</scope>
</reference>
<reference key="5">
    <citation type="journal article" date="2004" name="Proc. Natl. Acad. Sci. U.S.A.">
        <authorList>
            <person name="Malnic B."/>
            <person name="Godfrey P.A."/>
            <person name="Buck L.B."/>
        </authorList>
    </citation>
    <scope>ERRATUM OF PUBMED:14983052</scope>
</reference>